<dbReference type="EC" id="6.3.1.5" evidence="1"/>
<dbReference type="EMBL" id="BX950851">
    <property type="protein sequence ID" value="CAG75315.1"/>
    <property type="molecule type" value="Genomic_DNA"/>
</dbReference>
<dbReference type="RefSeq" id="WP_011093967.1">
    <property type="nucleotide sequence ID" value="NC_004547.2"/>
</dbReference>
<dbReference type="SMR" id="Q6D4H8"/>
<dbReference type="STRING" id="218491.ECA2412"/>
<dbReference type="KEGG" id="eca:ECA2412"/>
<dbReference type="PATRIC" id="fig|218491.5.peg.2443"/>
<dbReference type="eggNOG" id="COG0171">
    <property type="taxonomic scope" value="Bacteria"/>
</dbReference>
<dbReference type="HOGENOM" id="CLU_059327_3_0_6"/>
<dbReference type="OrthoDB" id="3266517at2"/>
<dbReference type="UniPathway" id="UPA00253">
    <property type="reaction ID" value="UER00333"/>
</dbReference>
<dbReference type="Proteomes" id="UP000007966">
    <property type="component" value="Chromosome"/>
</dbReference>
<dbReference type="GO" id="GO:0005737">
    <property type="term" value="C:cytoplasm"/>
    <property type="evidence" value="ECO:0007669"/>
    <property type="project" value="InterPro"/>
</dbReference>
<dbReference type="GO" id="GO:0005524">
    <property type="term" value="F:ATP binding"/>
    <property type="evidence" value="ECO:0007669"/>
    <property type="project" value="UniProtKB-UniRule"/>
</dbReference>
<dbReference type="GO" id="GO:0004359">
    <property type="term" value="F:glutaminase activity"/>
    <property type="evidence" value="ECO:0007669"/>
    <property type="project" value="InterPro"/>
</dbReference>
<dbReference type="GO" id="GO:0046872">
    <property type="term" value="F:metal ion binding"/>
    <property type="evidence" value="ECO:0007669"/>
    <property type="project" value="UniProtKB-KW"/>
</dbReference>
<dbReference type="GO" id="GO:0003952">
    <property type="term" value="F:NAD+ synthase (glutamine-hydrolyzing) activity"/>
    <property type="evidence" value="ECO:0007669"/>
    <property type="project" value="InterPro"/>
</dbReference>
<dbReference type="GO" id="GO:0008795">
    <property type="term" value="F:NAD+ synthase activity"/>
    <property type="evidence" value="ECO:0007669"/>
    <property type="project" value="UniProtKB-UniRule"/>
</dbReference>
<dbReference type="GO" id="GO:0009435">
    <property type="term" value="P:NAD biosynthetic process"/>
    <property type="evidence" value="ECO:0007669"/>
    <property type="project" value="UniProtKB-UniRule"/>
</dbReference>
<dbReference type="CDD" id="cd00553">
    <property type="entry name" value="NAD_synthase"/>
    <property type="match status" value="1"/>
</dbReference>
<dbReference type="FunFam" id="3.40.50.620:FF:000015">
    <property type="entry name" value="NH(3)-dependent NAD(+) synthetase"/>
    <property type="match status" value="1"/>
</dbReference>
<dbReference type="Gene3D" id="3.40.50.620">
    <property type="entry name" value="HUPs"/>
    <property type="match status" value="1"/>
</dbReference>
<dbReference type="HAMAP" id="MF_00193">
    <property type="entry name" value="NadE_ammonia_dep"/>
    <property type="match status" value="1"/>
</dbReference>
<dbReference type="InterPro" id="IPR022310">
    <property type="entry name" value="NAD/GMP_synthase"/>
</dbReference>
<dbReference type="InterPro" id="IPR003694">
    <property type="entry name" value="NAD_synthase"/>
</dbReference>
<dbReference type="InterPro" id="IPR022926">
    <property type="entry name" value="NH(3)-dep_NAD(+)_synth"/>
</dbReference>
<dbReference type="InterPro" id="IPR014729">
    <property type="entry name" value="Rossmann-like_a/b/a_fold"/>
</dbReference>
<dbReference type="NCBIfam" id="TIGR00552">
    <property type="entry name" value="nadE"/>
    <property type="match status" value="1"/>
</dbReference>
<dbReference type="NCBIfam" id="NF001979">
    <property type="entry name" value="PRK00768.1"/>
    <property type="match status" value="1"/>
</dbReference>
<dbReference type="PANTHER" id="PTHR23090">
    <property type="entry name" value="NH 3 /GLUTAMINE-DEPENDENT NAD + SYNTHETASE"/>
    <property type="match status" value="1"/>
</dbReference>
<dbReference type="PANTHER" id="PTHR23090:SF7">
    <property type="entry name" value="NH(3)-DEPENDENT NAD(+) SYNTHETASE"/>
    <property type="match status" value="1"/>
</dbReference>
<dbReference type="Pfam" id="PF02540">
    <property type="entry name" value="NAD_synthase"/>
    <property type="match status" value="1"/>
</dbReference>
<dbReference type="SUPFAM" id="SSF52402">
    <property type="entry name" value="Adenine nucleotide alpha hydrolases-like"/>
    <property type="match status" value="1"/>
</dbReference>
<accession>Q6D4H8</accession>
<feature type="chain" id="PRO_1000077557" description="NH(3)-dependent NAD(+) synthetase">
    <location>
        <begin position="1"/>
        <end position="274"/>
    </location>
</feature>
<feature type="binding site" evidence="1">
    <location>
        <begin position="46"/>
        <end position="53"/>
    </location>
    <ligand>
        <name>ATP</name>
        <dbReference type="ChEBI" id="CHEBI:30616"/>
    </ligand>
</feature>
<feature type="binding site" evidence="1">
    <location>
        <position position="52"/>
    </location>
    <ligand>
        <name>Mg(2+)</name>
        <dbReference type="ChEBI" id="CHEBI:18420"/>
    </ligand>
</feature>
<feature type="binding site" evidence="1">
    <location>
        <position position="140"/>
    </location>
    <ligand>
        <name>deamido-NAD(+)</name>
        <dbReference type="ChEBI" id="CHEBI:58437"/>
    </ligand>
</feature>
<feature type="binding site" evidence="1">
    <location>
        <position position="160"/>
    </location>
    <ligand>
        <name>ATP</name>
        <dbReference type="ChEBI" id="CHEBI:30616"/>
    </ligand>
</feature>
<feature type="binding site" evidence="1">
    <location>
        <position position="165"/>
    </location>
    <ligand>
        <name>Mg(2+)</name>
        <dbReference type="ChEBI" id="CHEBI:18420"/>
    </ligand>
</feature>
<feature type="binding site" evidence="1">
    <location>
        <position position="173"/>
    </location>
    <ligand>
        <name>deamido-NAD(+)</name>
        <dbReference type="ChEBI" id="CHEBI:58437"/>
    </ligand>
</feature>
<feature type="binding site" evidence="1">
    <location>
        <position position="180"/>
    </location>
    <ligand>
        <name>deamido-NAD(+)</name>
        <dbReference type="ChEBI" id="CHEBI:58437"/>
    </ligand>
</feature>
<feature type="binding site" evidence="1">
    <location>
        <position position="189"/>
    </location>
    <ligand>
        <name>ATP</name>
        <dbReference type="ChEBI" id="CHEBI:30616"/>
    </ligand>
</feature>
<feature type="binding site" evidence="1">
    <location>
        <position position="211"/>
    </location>
    <ligand>
        <name>ATP</name>
        <dbReference type="ChEBI" id="CHEBI:30616"/>
    </ligand>
</feature>
<feature type="binding site" evidence="1">
    <location>
        <begin position="260"/>
        <end position="261"/>
    </location>
    <ligand>
        <name>deamido-NAD(+)</name>
        <dbReference type="ChEBI" id="CHEBI:58437"/>
    </ligand>
</feature>
<organism>
    <name type="scientific">Pectobacterium atrosepticum (strain SCRI 1043 / ATCC BAA-672)</name>
    <name type="common">Erwinia carotovora subsp. atroseptica</name>
    <dbReference type="NCBI Taxonomy" id="218491"/>
    <lineage>
        <taxon>Bacteria</taxon>
        <taxon>Pseudomonadati</taxon>
        <taxon>Pseudomonadota</taxon>
        <taxon>Gammaproteobacteria</taxon>
        <taxon>Enterobacterales</taxon>
        <taxon>Pectobacteriaceae</taxon>
        <taxon>Pectobacterium</taxon>
    </lineage>
</organism>
<protein>
    <recommendedName>
        <fullName evidence="1">NH(3)-dependent NAD(+) synthetase</fullName>
        <ecNumber evidence="1">6.3.1.5</ecNumber>
    </recommendedName>
</protein>
<keyword id="KW-0067">ATP-binding</keyword>
<keyword id="KW-0436">Ligase</keyword>
<keyword id="KW-0460">Magnesium</keyword>
<keyword id="KW-0479">Metal-binding</keyword>
<keyword id="KW-0520">NAD</keyword>
<keyword id="KW-0547">Nucleotide-binding</keyword>
<keyword id="KW-1185">Reference proteome</keyword>
<name>NADE_PECAS</name>
<reference key="1">
    <citation type="journal article" date="2004" name="Proc. Natl. Acad. Sci. U.S.A.">
        <title>Genome sequence of the enterobacterial phytopathogen Erwinia carotovora subsp. atroseptica and characterization of virulence factors.</title>
        <authorList>
            <person name="Bell K.S."/>
            <person name="Sebaihia M."/>
            <person name="Pritchard L."/>
            <person name="Holden M.T.G."/>
            <person name="Hyman L.J."/>
            <person name="Holeva M.C."/>
            <person name="Thomson N.R."/>
            <person name="Bentley S.D."/>
            <person name="Churcher L.J.C."/>
            <person name="Mungall K."/>
            <person name="Atkin R."/>
            <person name="Bason N."/>
            <person name="Brooks K."/>
            <person name="Chillingworth T."/>
            <person name="Clark K."/>
            <person name="Doggett J."/>
            <person name="Fraser A."/>
            <person name="Hance Z."/>
            <person name="Hauser H."/>
            <person name="Jagels K."/>
            <person name="Moule S."/>
            <person name="Norbertczak H."/>
            <person name="Ormond D."/>
            <person name="Price C."/>
            <person name="Quail M.A."/>
            <person name="Sanders M."/>
            <person name="Walker D."/>
            <person name="Whitehead S."/>
            <person name="Salmond G.P.C."/>
            <person name="Birch P.R.J."/>
            <person name="Parkhill J."/>
            <person name="Toth I.K."/>
        </authorList>
    </citation>
    <scope>NUCLEOTIDE SEQUENCE [LARGE SCALE GENOMIC DNA]</scope>
    <source>
        <strain>SCRI 1043 / ATCC BAA-672</strain>
    </source>
</reference>
<sequence length="274" mass="30198">MSLQNDIITALGVKSSIDPAQEIRVSVDFLKNYLNAHPFITSLVLGISGGQDSTLTGKLCQTAITELRNETGTSRYQFIAVRLPYGVQADEADCQDAIAFIQPDRVLTVNIKPAIESSEATLRAIGVELSDFVKGNEKARERMKAQYSIAGMNAGLVVGTDHAAEAVTGFFTKYGDGGTDINPIFRLNKRQGKALLRELGCPSHLYTKAPTADLEEDRPSLPDEVALGVTYEKIDDYLEGKPIDANDAATIENWYRKTEHKRRPPITVFDDFWQ</sequence>
<gene>
    <name evidence="1" type="primary">nadE</name>
    <name type="ordered locus">ECA2412</name>
</gene>
<evidence type="ECO:0000255" key="1">
    <source>
        <dbReference type="HAMAP-Rule" id="MF_00193"/>
    </source>
</evidence>
<proteinExistence type="inferred from homology"/>
<comment type="function">
    <text evidence="1">Catalyzes the ATP-dependent amidation of deamido-NAD to form NAD. Uses ammonia as a nitrogen source.</text>
</comment>
<comment type="catalytic activity">
    <reaction evidence="1">
        <text>deamido-NAD(+) + NH4(+) + ATP = AMP + diphosphate + NAD(+) + H(+)</text>
        <dbReference type="Rhea" id="RHEA:21188"/>
        <dbReference type="ChEBI" id="CHEBI:15378"/>
        <dbReference type="ChEBI" id="CHEBI:28938"/>
        <dbReference type="ChEBI" id="CHEBI:30616"/>
        <dbReference type="ChEBI" id="CHEBI:33019"/>
        <dbReference type="ChEBI" id="CHEBI:57540"/>
        <dbReference type="ChEBI" id="CHEBI:58437"/>
        <dbReference type="ChEBI" id="CHEBI:456215"/>
        <dbReference type="EC" id="6.3.1.5"/>
    </reaction>
</comment>
<comment type="pathway">
    <text evidence="1">Cofactor biosynthesis; NAD(+) biosynthesis; NAD(+) from deamido-NAD(+) (ammonia route): step 1/1.</text>
</comment>
<comment type="subunit">
    <text evidence="1">Homodimer.</text>
</comment>
<comment type="similarity">
    <text evidence="1">Belongs to the NAD synthetase family.</text>
</comment>